<proteinExistence type="inferred from homology"/>
<name>BIOB_YERP3</name>
<accession>A7FKM9</accession>
<feature type="chain" id="PRO_0000381720" description="Biotin synthase">
    <location>
        <begin position="1"/>
        <end position="345"/>
    </location>
</feature>
<feature type="domain" description="Radical SAM core" evidence="2">
    <location>
        <begin position="38"/>
        <end position="256"/>
    </location>
</feature>
<feature type="binding site" evidence="1">
    <location>
        <position position="53"/>
    </location>
    <ligand>
        <name>[4Fe-4S] cluster</name>
        <dbReference type="ChEBI" id="CHEBI:49883"/>
        <note>4Fe-4S-S-AdoMet</note>
    </ligand>
</feature>
<feature type="binding site" evidence="1">
    <location>
        <position position="57"/>
    </location>
    <ligand>
        <name>[4Fe-4S] cluster</name>
        <dbReference type="ChEBI" id="CHEBI:49883"/>
        <note>4Fe-4S-S-AdoMet</note>
    </ligand>
</feature>
<feature type="binding site" evidence="1">
    <location>
        <position position="60"/>
    </location>
    <ligand>
        <name>[4Fe-4S] cluster</name>
        <dbReference type="ChEBI" id="CHEBI:49883"/>
        <note>4Fe-4S-S-AdoMet</note>
    </ligand>
</feature>
<feature type="binding site" evidence="1">
    <location>
        <position position="97"/>
    </location>
    <ligand>
        <name>[2Fe-2S] cluster</name>
        <dbReference type="ChEBI" id="CHEBI:190135"/>
    </ligand>
</feature>
<feature type="binding site" evidence="1">
    <location>
        <position position="128"/>
    </location>
    <ligand>
        <name>[2Fe-2S] cluster</name>
        <dbReference type="ChEBI" id="CHEBI:190135"/>
    </ligand>
</feature>
<feature type="binding site" evidence="1">
    <location>
        <position position="188"/>
    </location>
    <ligand>
        <name>[2Fe-2S] cluster</name>
        <dbReference type="ChEBI" id="CHEBI:190135"/>
    </ligand>
</feature>
<feature type="binding site" evidence="1">
    <location>
        <position position="260"/>
    </location>
    <ligand>
        <name>[2Fe-2S] cluster</name>
        <dbReference type="ChEBI" id="CHEBI:190135"/>
    </ligand>
</feature>
<dbReference type="EC" id="2.8.1.6" evidence="1"/>
<dbReference type="EMBL" id="CP000720">
    <property type="protein sequence ID" value="ABS47575.1"/>
    <property type="molecule type" value="Genomic_DNA"/>
</dbReference>
<dbReference type="RefSeq" id="WP_012105481.1">
    <property type="nucleotide sequence ID" value="NC_009708.1"/>
</dbReference>
<dbReference type="SMR" id="A7FKM9"/>
<dbReference type="KEGG" id="ypi:YpsIP31758_2844"/>
<dbReference type="HOGENOM" id="CLU_033172_1_2_6"/>
<dbReference type="UniPathway" id="UPA00078">
    <property type="reaction ID" value="UER00162"/>
</dbReference>
<dbReference type="Proteomes" id="UP000002412">
    <property type="component" value="Chromosome"/>
</dbReference>
<dbReference type="GO" id="GO:0051537">
    <property type="term" value="F:2 iron, 2 sulfur cluster binding"/>
    <property type="evidence" value="ECO:0007669"/>
    <property type="project" value="UniProtKB-KW"/>
</dbReference>
<dbReference type="GO" id="GO:0051539">
    <property type="term" value="F:4 iron, 4 sulfur cluster binding"/>
    <property type="evidence" value="ECO:0007669"/>
    <property type="project" value="UniProtKB-KW"/>
</dbReference>
<dbReference type="GO" id="GO:0004076">
    <property type="term" value="F:biotin synthase activity"/>
    <property type="evidence" value="ECO:0007669"/>
    <property type="project" value="UniProtKB-UniRule"/>
</dbReference>
<dbReference type="GO" id="GO:0005506">
    <property type="term" value="F:iron ion binding"/>
    <property type="evidence" value="ECO:0007669"/>
    <property type="project" value="UniProtKB-UniRule"/>
</dbReference>
<dbReference type="GO" id="GO:0009102">
    <property type="term" value="P:biotin biosynthetic process"/>
    <property type="evidence" value="ECO:0007669"/>
    <property type="project" value="UniProtKB-UniRule"/>
</dbReference>
<dbReference type="CDD" id="cd01335">
    <property type="entry name" value="Radical_SAM"/>
    <property type="match status" value="1"/>
</dbReference>
<dbReference type="FunFam" id="3.20.20.70:FF:000011">
    <property type="entry name" value="Biotin synthase"/>
    <property type="match status" value="1"/>
</dbReference>
<dbReference type="Gene3D" id="3.20.20.70">
    <property type="entry name" value="Aldolase class I"/>
    <property type="match status" value="1"/>
</dbReference>
<dbReference type="HAMAP" id="MF_01694">
    <property type="entry name" value="BioB"/>
    <property type="match status" value="1"/>
</dbReference>
<dbReference type="InterPro" id="IPR013785">
    <property type="entry name" value="Aldolase_TIM"/>
</dbReference>
<dbReference type="InterPro" id="IPR010722">
    <property type="entry name" value="BATS_dom"/>
</dbReference>
<dbReference type="InterPro" id="IPR002684">
    <property type="entry name" value="Biotin_synth/BioAB"/>
</dbReference>
<dbReference type="InterPro" id="IPR024177">
    <property type="entry name" value="Biotin_synthase"/>
</dbReference>
<dbReference type="InterPro" id="IPR006638">
    <property type="entry name" value="Elp3/MiaA/NifB-like_rSAM"/>
</dbReference>
<dbReference type="InterPro" id="IPR007197">
    <property type="entry name" value="rSAM"/>
</dbReference>
<dbReference type="NCBIfam" id="TIGR00433">
    <property type="entry name" value="bioB"/>
    <property type="match status" value="1"/>
</dbReference>
<dbReference type="PANTHER" id="PTHR22976">
    <property type="entry name" value="BIOTIN SYNTHASE"/>
    <property type="match status" value="1"/>
</dbReference>
<dbReference type="PANTHER" id="PTHR22976:SF2">
    <property type="entry name" value="BIOTIN SYNTHASE, MITOCHONDRIAL"/>
    <property type="match status" value="1"/>
</dbReference>
<dbReference type="Pfam" id="PF06968">
    <property type="entry name" value="BATS"/>
    <property type="match status" value="1"/>
</dbReference>
<dbReference type="Pfam" id="PF04055">
    <property type="entry name" value="Radical_SAM"/>
    <property type="match status" value="1"/>
</dbReference>
<dbReference type="PIRSF" id="PIRSF001619">
    <property type="entry name" value="Biotin_synth"/>
    <property type="match status" value="1"/>
</dbReference>
<dbReference type="SFLD" id="SFLDF00272">
    <property type="entry name" value="biotin_synthase"/>
    <property type="match status" value="1"/>
</dbReference>
<dbReference type="SFLD" id="SFLDS00029">
    <property type="entry name" value="Radical_SAM"/>
    <property type="match status" value="1"/>
</dbReference>
<dbReference type="SMART" id="SM00876">
    <property type="entry name" value="BATS"/>
    <property type="match status" value="1"/>
</dbReference>
<dbReference type="SMART" id="SM00729">
    <property type="entry name" value="Elp3"/>
    <property type="match status" value="1"/>
</dbReference>
<dbReference type="SUPFAM" id="SSF102114">
    <property type="entry name" value="Radical SAM enzymes"/>
    <property type="match status" value="1"/>
</dbReference>
<dbReference type="PROSITE" id="PS51918">
    <property type="entry name" value="RADICAL_SAM"/>
    <property type="match status" value="1"/>
</dbReference>
<keyword id="KW-0001">2Fe-2S</keyword>
<keyword id="KW-0004">4Fe-4S</keyword>
<keyword id="KW-0093">Biotin biosynthesis</keyword>
<keyword id="KW-0408">Iron</keyword>
<keyword id="KW-0411">Iron-sulfur</keyword>
<keyword id="KW-0479">Metal-binding</keyword>
<keyword id="KW-0949">S-adenosyl-L-methionine</keyword>
<keyword id="KW-0808">Transferase</keyword>
<comment type="function">
    <text evidence="1">Catalyzes the conversion of dethiobiotin (DTB) to biotin by the insertion of a sulfur atom into dethiobiotin via a radical-based mechanism.</text>
</comment>
<comment type="catalytic activity">
    <reaction evidence="1">
        <text>(4R,5S)-dethiobiotin + (sulfur carrier)-SH + 2 reduced [2Fe-2S]-[ferredoxin] + 2 S-adenosyl-L-methionine = (sulfur carrier)-H + biotin + 2 5'-deoxyadenosine + 2 L-methionine + 2 oxidized [2Fe-2S]-[ferredoxin]</text>
        <dbReference type="Rhea" id="RHEA:22060"/>
        <dbReference type="Rhea" id="RHEA-COMP:10000"/>
        <dbReference type="Rhea" id="RHEA-COMP:10001"/>
        <dbReference type="Rhea" id="RHEA-COMP:14737"/>
        <dbReference type="Rhea" id="RHEA-COMP:14739"/>
        <dbReference type="ChEBI" id="CHEBI:17319"/>
        <dbReference type="ChEBI" id="CHEBI:29917"/>
        <dbReference type="ChEBI" id="CHEBI:33737"/>
        <dbReference type="ChEBI" id="CHEBI:33738"/>
        <dbReference type="ChEBI" id="CHEBI:57586"/>
        <dbReference type="ChEBI" id="CHEBI:57844"/>
        <dbReference type="ChEBI" id="CHEBI:59789"/>
        <dbReference type="ChEBI" id="CHEBI:64428"/>
        <dbReference type="ChEBI" id="CHEBI:149473"/>
        <dbReference type="EC" id="2.8.1.6"/>
    </reaction>
</comment>
<comment type="cofactor">
    <cofactor evidence="1">
        <name>[4Fe-4S] cluster</name>
        <dbReference type="ChEBI" id="CHEBI:49883"/>
    </cofactor>
    <text evidence="1">Binds 1 [4Fe-4S] cluster. The cluster is coordinated with 3 cysteines and an exchangeable S-adenosyl-L-methionine.</text>
</comment>
<comment type="cofactor">
    <cofactor evidence="1">
        <name>[2Fe-2S] cluster</name>
        <dbReference type="ChEBI" id="CHEBI:190135"/>
    </cofactor>
    <text evidence="1">Binds 1 [2Fe-2S] cluster. The cluster is coordinated with 3 cysteines and 1 arginine.</text>
</comment>
<comment type="pathway">
    <text evidence="1">Cofactor biosynthesis; biotin biosynthesis; biotin from 7,8-diaminononanoate: step 2/2.</text>
</comment>
<comment type="subunit">
    <text evidence="1">Homodimer.</text>
</comment>
<comment type="similarity">
    <text evidence="1">Belongs to the radical SAM superfamily. Biotin synthase family.</text>
</comment>
<organism>
    <name type="scientific">Yersinia pseudotuberculosis serotype O:1b (strain IP 31758)</name>
    <dbReference type="NCBI Taxonomy" id="349747"/>
    <lineage>
        <taxon>Bacteria</taxon>
        <taxon>Pseudomonadati</taxon>
        <taxon>Pseudomonadota</taxon>
        <taxon>Gammaproteobacteria</taxon>
        <taxon>Enterobacterales</taxon>
        <taxon>Yersiniaceae</taxon>
        <taxon>Yersinia</taxon>
    </lineage>
</organism>
<evidence type="ECO:0000255" key="1">
    <source>
        <dbReference type="HAMAP-Rule" id="MF_01694"/>
    </source>
</evidence>
<evidence type="ECO:0000255" key="2">
    <source>
        <dbReference type="PROSITE-ProRule" id="PRU01266"/>
    </source>
</evidence>
<reference key="1">
    <citation type="journal article" date="2007" name="PLoS Genet.">
        <title>The complete genome sequence of Yersinia pseudotuberculosis IP31758, the causative agent of Far East scarlet-like fever.</title>
        <authorList>
            <person name="Eppinger M."/>
            <person name="Rosovitz M.J."/>
            <person name="Fricke W.F."/>
            <person name="Rasko D.A."/>
            <person name="Kokorina G."/>
            <person name="Fayolle C."/>
            <person name="Lindler L.E."/>
            <person name="Carniel E."/>
            <person name="Ravel J."/>
        </authorList>
    </citation>
    <scope>NUCLEOTIDE SEQUENCE [LARGE SCALE GENOMIC DNA]</scope>
    <source>
        <strain>IP 31758</strain>
    </source>
</reference>
<protein>
    <recommendedName>
        <fullName evidence="1">Biotin synthase</fullName>
        <ecNumber evidence="1">2.8.1.6</ecNumber>
    </recommendedName>
</protein>
<sequence length="345" mass="38392">MATYHHWTVGQALALFDKPLLELLFEAQQVHRQHFDPRQVQVSTLLSIKTGACPEDCKYCPQSSRYKTGLESERLMQVEQVLESAKKAKAAGSTRFCMGAAWKNPHERDMPYLVKMVEGVKALGMETCMTLGSLSKQQAHRLADAGLDYYNHNLDTSPEFYGSIITTRSYQERLDTLNEVRDAGIKVCSGGIVGLGETVRDRAGLLVQLANLPKPPESVPINMLVKVKGTPLENNAEVDAFEFIRTIAVARIMMPSSYVRLSAGREQMNEQTQAMCFMAGANSIFYGCKLLTTPNPDEDNDLQLFRKLGLNPQQTATSHGDREQQQALTEQLLHGDTAQFYNAAV</sequence>
<gene>
    <name evidence="1" type="primary">bioB</name>
    <name type="ordered locus">YpsIP31758_2844</name>
</gene>